<accession>Q0SYY3</accession>
<feature type="chain" id="PRO_1000062748" description="TDP-N-acetylfucosamine:lipid II N-acetylfucosaminyltransferase">
    <location>
        <begin position="1"/>
        <end position="359"/>
    </location>
</feature>
<protein>
    <recommendedName>
        <fullName evidence="1">TDP-N-acetylfucosamine:lipid II N-acetylfucosaminyltransferase</fullName>
        <ecNumber evidence="1">2.4.1.325</ecNumber>
    </recommendedName>
    <alternativeName>
        <fullName evidence="1">4-alpha-L-fucosyltransferase</fullName>
    </alternativeName>
    <alternativeName>
        <fullName evidence="1">TDP-Fuc4NAc:lipid II Fuc4NAc transferase</fullName>
        <shortName evidence="1">Fuc4NAc transferase</shortName>
    </alternativeName>
</protein>
<dbReference type="EC" id="2.4.1.325" evidence="1"/>
<dbReference type="EMBL" id="CP000266">
    <property type="protein sequence ID" value="ABF05732.1"/>
    <property type="molecule type" value="Genomic_DNA"/>
</dbReference>
<dbReference type="RefSeq" id="WP_000217247.1">
    <property type="nucleotide sequence ID" value="NC_008258.1"/>
</dbReference>
<dbReference type="SMR" id="Q0SYY3"/>
<dbReference type="CAZy" id="GT56">
    <property type="family name" value="Glycosyltransferase Family 56"/>
</dbReference>
<dbReference type="KEGG" id="sfv:SFV_3711"/>
<dbReference type="HOGENOM" id="CLU_066584_0_0_6"/>
<dbReference type="UniPathway" id="UPA00566"/>
<dbReference type="Proteomes" id="UP000000659">
    <property type="component" value="Chromosome"/>
</dbReference>
<dbReference type="GO" id="GO:0005886">
    <property type="term" value="C:plasma membrane"/>
    <property type="evidence" value="ECO:0007669"/>
    <property type="project" value="UniProtKB-SubCell"/>
</dbReference>
<dbReference type="GO" id="GO:0102031">
    <property type="term" value="F:4-acetamido-4,6-dideoxy-D-galactose transferase activity"/>
    <property type="evidence" value="ECO:0007669"/>
    <property type="project" value="UniProtKB-EC"/>
</dbReference>
<dbReference type="GO" id="GO:0008417">
    <property type="term" value="F:fucosyltransferase activity"/>
    <property type="evidence" value="ECO:0007669"/>
    <property type="project" value="InterPro"/>
</dbReference>
<dbReference type="GO" id="GO:0009246">
    <property type="term" value="P:enterobacterial common antigen biosynthetic process"/>
    <property type="evidence" value="ECO:0007669"/>
    <property type="project" value="UniProtKB-UniRule"/>
</dbReference>
<dbReference type="GO" id="GO:0036065">
    <property type="term" value="P:fucosylation"/>
    <property type="evidence" value="ECO:0007669"/>
    <property type="project" value="InterPro"/>
</dbReference>
<dbReference type="HAMAP" id="MF_01002">
    <property type="entry name" value="WecF_RffT"/>
    <property type="match status" value="1"/>
</dbReference>
<dbReference type="InterPro" id="IPR009993">
    <property type="entry name" value="WecF"/>
</dbReference>
<dbReference type="NCBIfam" id="NF002752">
    <property type="entry name" value="PRK02797.1-1"/>
    <property type="match status" value="1"/>
</dbReference>
<dbReference type="NCBIfam" id="NF002753">
    <property type="entry name" value="PRK02797.1-2"/>
    <property type="match status" value="1"/>
</dbReference>
<dbReference type="NCBIfam" id="NF002754">
    <property type="entry name" value="PRK02797.1-3"/>
    <property type="match status" value="1"/>
</dbReference>
<dbReference type="Pfam" id="PF07429">
    <property type="entry name" value="Glyco_transf_56"/>
    <property type="match status" value="1"/>
</dbReference>
<name>WECF_SHIF8</name>
<proteinExistence type="inferred from homology"/>
<evidence type="ECO:0000255" key="1">
    <source>
        <dbReference type="HAMAP-Rule" id="MF_01002"/>
    </source>
</evidence>
<reference key="1">
    <citation type="journal article" date="2006" name="BMC Genomics">
        <title>Complete genome sequence of Shigella flexneri 5b and comparison with Shigella flexneri 2a.</title>
        <authorList>
            <person name="Nie H."/>
            <person name="Yang F."/>
            <person name="Zhang X."/>
            <person name="Yang J."/>
            <person name="Chen L."/>
            <person name="Wang J."/>
            <person name="Xiong Z."/>
            <person name="Peng J."/>
            <person name="Sun L."/>
            <person name="Dong J."/>
            <person name="Xue Y."/>
            <person name="Xu X."/>
            <person name="Chen S."/>
            <person name="Yao Z."/>
            <person name="Shen Y."/>
            <person name="Jin Q."/>
        </authorList>
    </citation>
    <scope>NUCLEOTIDE SEQUENCE [LARGE SCALE GENOMIC DNA]</scope>
    <source>
        <strain>8401</strain>
    </source>
</reference>
<keyword id="KW-0997">Cell inner membrane</keyword>
<keyword id="KW-1003">Cell membrane</keyword>
<keyword id="KW-0328">Glycosyltransferase</keyword>
<keyword id="KW-0472">Membrane</keyword>
<keyword id="KW-0808">Transferase</keyword>
<organism>
    <name type="scientific">Shigella flexneri serotype 5b (strain 8401)</name>
    <dbReference type="NCBI Taxonomy" id="373384"/>
    <lineage>
        <taxon>Bacteria</taxon>
        <taxon>Pseudomonadati</taxon>
        <taxon>Pseudomonadota</taxon>
        <taxon>Gammaproteobacteria</taxon>
        <taxon>Enterobacterales</taxon>
        <taxon>Enterobacteriaceae</taxon>
        <taxon>Shigella</taxon>
    </lineage>
</organism>
<sequence length="359" mass="40514">MTVLIHVLGSDIPHHNRTVLRFFNDALAATSEHAREFMVVGKDDGLSDSCPALSVQFFPGKKSLAEAVIAKAKANRQQRFFFHGQFNPTLWLALLSGGIKPSQFFWHIWGADLYELSSGLRYKLFYPLRRLAQKRVGCVFATRGDLSFFAKTHPKVRGELLYFPTRMDPSLNTMANDRQREGKMTILVGNSGDRSNEHVAALRAVHQQFGDTVKVVVPMGYPPNNEAYIEEVRQAGLELFSEENLQILSEKLEFDAYLALLRQCDLGYFIFARQQGIGTLCLLIQAGIPCVLNRENPFWQDMTEQHLPVLFTTDDLNEDIVREAQRQLASADKNTIAFFSPNYLQGWQRALAIAAGEVA</sequence>
<gene>
    <name evidence="1" type="primary">wecF</name>
    <name evidence="1" type="synonym">rffT</name>
    <name type="ordered locus">SFV_3711</name>
</gene>
<comment type="function">
    <text evidence="1">Catalyzes the synthesis of Und-PP-GlcNAc-ManNAcA-Fuc4NAc (Lipid III), the third lipid-linked intermediate involved in ECA synthesis.</text>
</comment>
<comment type="catalytic activity">
    <reaction evidence="1">
        <text>beta-D-ManNAcA-(1-&gt;4)-alpha-D-GlcNAc-di-trans,octa-cis-undecaprenyl diphosphate + dTDP-4-acetamido-4,6-dideoxy-alpha-D-galactose = alpha-D-FucNAc4-(1-&gt;4)-beta-D-ManNAcA-(1-&gt;4)-D-GlcNAc-undecaprenyl diphosphate + dTDP + H(+)</text>
        <dbReference type="Rhea" id="RHEA:28759"/>
        <dbReference type="ChEBI" id="CHEBI:15378"/>
        <dbReference type="ChEBI" id="CHEBI:58369"/>
        <dbReference type="ChEBI" id="CHEBI:61495"/>
        <dbReference type="ChEBI" id="CHEBI:61496"/>
        <dbReference type="ChEBI" id="CHEBI:68493"/>
        <dbReference type="EC" id="2.4.1.325"/>
    </reaction>
</comment>
<comment type="pathway">
    <text evidence="1">Bacterial outer membrane biogenesis; enterobacterial common antigen biosynthesis.</text>
</comment>
<comment type="subcellular location">
    <subcellularLocation>
        <location evidence="1">Cell inner membrane</location>
        <topology evidence="1">Peripheral membrane protein</topology>
    </subcellularLocation>
</comment>
<comment type="similarity">
    <text evidence="1">Belongs to the glycosyltransferase 56 family.</text>
</comment>